<organism>
    <name type="scientific">Solidesulfovibrio magneticus (strain ATCC 700980 / DSM 13731 / RS-1)</name>
    <name type="common">Desulfovibrio magneticus</name>
    <dbReference type="NCBI Taxonomy" id="573370"/>
    <lineage>
        <taxon>Bacteria</taxon>
        <taxon>Pseudomonadati</taxon>
        <taxon>Thermodesulfobacteriota</taxon>
        <taxon>Desulfovibrionia</taxon>
        <taxon>Desulfovibrionales</taxon>
        <taxon>Desulfovibrionaceae</taxon>
        <taxon>Solidesulfovibrio</taxon>
    </lineage>
</organism>
<name>RL31_SOLM1</name>
<evidence type="ECO:0000255" key="1">
    <source>
        <dbReference type="HAMAP-Rule" id="MF_00501"/>
    </source>
</evidence>
<evidence type="ECO:0000305" key="2"/>
<proteinExistence type="inferred from homology"/>
<reference key="1">
    <citation type="journal article" date="2009" name="Genome Res.">
        <title>Whole genome sequence of Desulfovibrio magneticus strain RS-1 revealed common gene clusters in magnetotactic bacteria.</title>
        <authorList>
            <person name="Nakazawa H."/>
            <person name="Arakaki A."/>
            <person name="Narita-Yamada S."/>
            <person name="Yashiro I."/>
            <person name="Jinno K."/>
            <person name="Aoki N."/>
            <person name="Tsuruyama A."/>
            <person name="Okamura Y."/>
            <person name="Tanikawa S."/>
            <person name="Fujita N."/>
            <person name="Takeyama H."/>
            <person name="Matsunaga T."/>
        </authorList>
    </citation>
    <scope>NUCLEOTIDE SEQUENCE [LARGE SCALE GENOMIC DNA]</scope>
    <source>
        <strain>ATCC 700980 / DSM 13731 / RS-1</strain>
    </source>
</reference>
<keyword id="KW-0479">Metal-binding</keyword>
<keyword id="KW-0687">Ribonucleoprotein</keyword>
<keyword id="KW-0689">Ribosomal protein</keyword>
<keyword id="KW-0694">RNA-binding</keyword>
<keyword id="KW-0699">rRNA-binding</keyword>
<keyword id="KW-0862">Zinc</keyword>
<comment type="function">
    <text evidence="1">Binds the 23S rRNA.</text>
</comment>
<comment type="cofactor">
    <cofactor evidence="1">
        <name>Zn(2+)</name>
        <dbReference type="ChEBI" id="CHEBI:29105"/>
    </cofactor>
    <text evidence="1">Binds 1 zinc ion per subunit.</text>
</comment>
<comment type="subunit">
    <text evidence="1">Part of the 50S ribosomal subunit.</text>
</comment>
<comment type="similarity">
    <text evidence="1">Belongs to the bacterial ribosomal protein bL31 family. Type A subfamily.</text>
</comment>
<sequence length="71" mass="8209">MKKDIHPKTFKATIRCHCGFEAQALSTKGELVQVEVCSNCHPFFTGKQRFLDTAGRIDRFRKKYANFEKKA</sequence>
<gene>
    <name evidence="1" type="primary">rpmE</name>
    <name type="ordered locus">DMR_31300</name>
</gene>
<protein>
    <recommendedName>
        <fullName evidence="1">Large ribosomal subunit protein bL31</fullName>
    </recommendedName>
    <alternativeName>
        <fullName evidence="2">50S ribosomal protein L31</fullName>
    </alternativeName>
</protein>
<feature type="chain" id="PRO_1000206520" description="Large ribosomal subunit protein bL31">
    <location>
        <begin position="1"/>
        <end position="71"/>
    </location>
</feature>
<feature type="binding site" evidence="1">
    <location>
        <position position="16"/>
    </location>
    <ligand>
        <name>Zn(2+)</name>
        <dbReference type="ChEBI" id="CHEBI:29105"/>
    </ligand>
</feature>
<feature type="binding site" evidence="1">
    <location>
        <position position="18"/>
    </location>
    <ligand>
        <name>Zn(2+)</name>
        <dbReference type="ChEBI" id="CHEBI:29105"/>
    </ligand>
</feature>
<feature type="binding site" evidence="1">
    <location>
        <position position="37"/>
    </location>
    <ligand>
        <name>Zn(2+)</name>
        <dbReference type="ChEBI" id="CHEBI:29105"/>
    </ligand>
</feature>
<feature type="binding site" evidence="1">
    <location>
        <position position="40"/>
    </location>
    <ligand>
        <name>Zn(2+)</name>
        <dbReference type="ChEBI" id="CHEBI:29105"/>
    </ligand>
</feature>
<accession>C4XIQ3</accession>
<dbReference type="EMBL" id="AP010904">
    <property type="protein sequence ID" value="BAH76621.1"/>
    <property type="molecule type" value="Genomic_DNA"/>
</dbReference>
<dbReference type="RefSeq" id="WP_015861775.1">
    <property type="nucleotide sequence ID" value="NC_012796.1"/>
</dbReference>
<dbReference type="SMR" id="C4XIQ3"/>
<dbReference type="STRING" id="573370.DMR_31300"/>
<dbReference type="KEGG" id="dma:DMR_31300"/>
<dbReference type="eggNOG" id="COG0254">
    <property type="taxonomic scope" value="Bacteria"/>
</dbReference>
<dbReference type="HOGENOM" id="CLU_114306_4_0_7"/>
<dbReference type="OrthoDB" id="9803251at2"/>
<dbReference type="Proteomes" id="UP000009071">
    <property type="component" value="Chromosome"/>
</dbReference>
<dbReference type="GO" id="GO:1990904">
    <property type="term" value="C:ribonucleoprotein complex"/>
    <property type="evidence" value="ECO:0007669"/>
    <property type="project" value="UniProtKB-KW"/>
</dbReference>
<dbReference type="GO" id="GO:0005840">
    <property type="term" value="C:ribosome"/>
    <property type="evidence" value="ECO:0007669"/>
    <property type="project" value="UniProtKB-KW"/>
</dbReference>
<dbReference type="GO" id="GO:0046872">
    <property type="term" value="F:metal ion binding"/>
    <property type="evidence" value="ECO:0007669"/>
    <property type="project" value="UniProtKB-KW"/>
</dbReference>
<dbReference type="GO" id="GO:0019843">
    <property type="term" value="F:rRNA binding"/>
    <property type="evidence" value="ECO:0007669"/>
    <property type="project" value="UniProtKB-KW"/>
</dbReference>
<dbReference type="GO" id="GO:0003735">
    <property type="term" value="F:structural constituent of ribosome"/>
    <property type="evidence" value="ECO:0007669"/>
    <property type="project" value="InterPro"/>
</dbReference>
<dbReference type="GO" id="GO:0006412">
    <property type="term" value="P:translation"/>
    <property type="evidence" value="ECO:0007669"/>
    <property type="project" value="UniProtKB-UniRule"/>
</dbReference>
<dbReference type="Gene3D" id="4.10.830.30">
    <property type="entry name" value="Ribosomal protein L31"/>
    <property type="match status" value="1"/>
</dbReference>
<dbReference type="HAMAP" id="MF_00501">
    <property type="entry name" value="Ribosomal_bL31_1"/>
    <property type="match status" value="1"/>
</dbReference>
<dbReference type="InterPro" id="IPR034704">
    <property type="entry name" value="Ribosomal_bL28/bL31-like_sf"/>
</dbReference>
<dbReference type="InterPro" id="IPR002150">
    <property type="entry name" value="Ribosomal_bL31"/>
</dbReference>
<dbReference type="InterPro" id="IPR027491">
    <property type="entry name" value="Ribosomal_bL31_A"/>
</dbReference>
<dbReference type="InterPro" id="IPR042105">
    <property type="entry name" value="Ribosomal_bL31_sf"/>
</dbReference>
<dbReference type="NCBIfam" id="TIGR00105">
    <property type="entry name" value="L31"/>
    <property type="match status" value="1"/>
</dbReference>
<dbReference type="NCBIfam" id="NF000612">
    <property type="entry name" value="PRK00019.1"/>
    <property type="match status" value="1"/>
</dbReference>
<dbReference type="NCBIfam" id="NF001809">
    <property type="entry name" value="PRK00528.1"/>
    <property type="match status" value="1"/>
</dbReference>
<dbReference type="PANTHER" id="PTHR33280">
    <property type="entry name" value="50S RIBOSOMAL PROTEIN L31, CHLOROPLASTIC"/>
    <property type="match status" value="1"/>
</dbReference>
<dbReference type="PANTHER" id="PTHR33280:SF1">
    <property type="entry name" value="LARGE RIBOSOMAL SUBUNIT PROTEIN BL31C"/>
    <property type="match status" value="1"/>
</dbReference>
<dbReference type="Pfam" id="PF01197">
    <property type="entry name" value="Ribosomal_L31"/>
    <property type="match status" value="1"/>
</dbReference>
<dbReference type="PRINTS" id="PR01249">
    <property type="entry name" value="RIBOSOMALL31"/>
</dbReference>
<dbReference type="SUPFAM" id="SSF143800">
    <property type="entry name" value="L28p-like"/>
    <property type="match status" value="1"/>
</dbReference>
<dbReference type="PROSITE" id="PS01143">
    <property type="entry name" value="RIBOSOMAL_L31"/>
    <property type="match status" value="1"/>
</dbReference>